<protein>
    <recommendedName>
        <fullName>Uncharacterized protein ycf66</fullName>
        <shortName>RF66</shortName>
    </recommendedName>
</protein>
<accession>Q9MUQ8</accession>
<dbReference type="EMBL" id="AF166114">
    <property type="protein sequence ID" value="AAF43842.1"/>
    <property type="molecule type" value="Genomic_DNA"/>
</dbReference>
<dbReference type="RefSeq" id="NP_038402.1">
    <property type="nucleotide sequence ID" value="NC_002186.1"/>
</dbReference>
<dbReference type="GeneID" id="800966"/>
<dbReference type="GO" id="GO:0009507">
    <property type="term" value="C:chloroplast"/>
    <property type="evidence" value="ECO:0007669"/>
    <property type="project" value="UniProtKB-SubCell"/>
</dbReference>
<dbReference type="InterPro" id="IPR010004">
    <property type="entry name" value="Uncharacterised_Ycf66"/>
</dbReference>
<dbReference type="Pfam" id="PF07444">
    <property type="entry name" value="Ycf66_N"/>
    <property type="match status" value="1"/>
</dbReference>
<reference key="1">
    <citation type="journal article" date="2000" name="Nature">
        <title>Ancestral chloroplast genome in Mesostigma viride reveals an early branch of green plant evolution.</title>
        <authorList>
            <person name="Lemieux C."/>
            <person name="Otis C."/>
            <person name="Turmel M."/>
        </authorList>
    </citation>
    <scope>NUCLEOTIDE SEQUENCE [LARGE SCALE GENOMIC DNA]</scope>
    <source>
        <strain>NIES-296 / KY-14 / CCMP 2046</strain>
    </source>
</reference>
<keyword id="KW-0150">Chloroplast</keyword>
<keyword id="KW-0934">Plastid</keyword>
<evidence type="ECO:0000305" key="1"/>
<feature type="chain" id="PRO_0000217392" description="Uncharacterized protein ycf66">
    <location>
        <begin position="1"/>
        <end position="170"/>
    </location>
</feature>
<comment type="subcellular location">
    <subcellularLocation>
        <location>Plastid</location>
        <location>Chloroplast</location>
    </subcellularLocation>
</comment>
<comment type="similarity">
    <text evidence="1">Belongs to the ycf66 family.</text>
</comment>
<sequence length="170" mass="19397">MINIEFGPSTILGIAVVCGGILLYITRTIKPEISRDHDIFFSSVALLIGGILIFQGWRLDPILLFGQMLSTGTALCFIIESLKLRVPKENNKSLFSTQNKNNSNNRIIKFQPPSKYDINLNQRGKKEKKNNNFQLKENSKYTKDSLVPSNWNDINISSIDYEKPIDYQKK</sequence>
<proteinExistence type="inferred from homology"/>
<name>YCF66_MESVI</name>
<organism>
    <name type="scientific">Mesostigma viride</name>
    <name type="common">Green alga</name>
    <dbReference type="NCBI Taxonomy" id="41882"/>
    <lineage>
        <taxon>Eukaryota</taxon>
        <taxon>Viridiplantae</taxon>
        <taxon>Streptophyta</taxon>
        <taxon>Mesostigmatophyceae</taxon>
        <taxon>Mesostigmatales</taxon>
        <taxon>Mesostigmataceae</taxon>
        <taxon>Mesostigma</taxon>
    </lineage>
</organism>
<gene>
    <name type="primary">ycf66</name>
</gene>
<geneLocation type="chloroplast"/>